<proteinExistence type="inferred from homology"/>
<evidence type="ECO:0000255" key="1">
    <source>
        <dbReference type="HAMAP-Rule" id="MF_00122"/>
    </source>
</evidence>
<organism>
    <name type="scientific">Thermotoga sp. (strain RQ2)</name>
    <dbReference type="NCBI Taxonomy" id="126740"/>
    <lineage>
        <taxon>Bacteria</taxon>
        <taxon>Thermotogati</taxon>
        <taxon>Thermotogota</taxon>
        <taxon>Thermotogae</taxon>
        <taxon>Thermotogales</taxon>
        <taxon>Thermotogaceae</taxon>
        <taxon>Thermotoga</taxon>
    </lineage>
</organism>
<gene>
    <name evidence="1" type="primary">gatC</name>
    <name type="ordered locus">TRQ2_0696</name>
</gene>
<comment type="function">
    <text evidence="1">Allows the formation of correctly charged Asn-tRNA(Asn) or Gln-tRNA(Gln) through the transamidation of misacylated Asp-tRNA(Asn) or Glu-tRNA(Gln) in organisms which lack either or both of asparaginyl-tRNA or glutaminyl-tRNA synthetases. The reaction takes place in the presence of glutamine and ATP through an activated phospho-Asp-tRNA(Asn) or phospho-Glu-tRNA(Gln).</text>
</comment>
<comment type="catalytic activity">
    <reaction evidence="1">
        <text>L-glutamyl-tRNA(Gln) + L-glutamine + ATP + H2O = L-glutaminyl-tRNA(Gln) + L-glutamate + ADP + phosphate + H(+)</text>
        <dbReference type="Rhea" id="RHEA:17521"/>
        <dbReference type="Rhea" id="RHEA-COMP:9681"/>
        <dbReference type="Rhea" id="RHEA-COMP:9684"/>
        <dbReference type="ChEBI" id="CHEBI:15377"/>
        <dbReference type="ChEBI" id="CHEBI:15378"/>
        <dbReference type="ChEBI" id="CHEBI:29985"/>
        <dbReference type="ChEBI" id="CHEBI:30616"/>
        <dbReference type="ChEBI" id="CHEBI:43474"/>
        <dbReference type="ChEBI" id="CHEBI:58359"/>
        <dbReference type="ChEBI" id="CHEBI:78520"/>
        <dbReference type="ChEBI" id="CHEBI:78521"/>
        <dbReference type="ChEBI" id="CHEBI:456216"/>
    </reaction>
</comment>
<comment type="catalytic activity">
    <reaction evidence="1">
        <text>L-aspartyl-tRNA(Asn) + L-glutamine + ATP + H2O = L-asparaginyl-tRNA(Asn) + L-glutamate + ADP + phosphate + 2 H(+)</text>
        <dbReference type="Rhea" id="RHEA:14513"/>
        <dbReference type="Rhea" id="RHEA-COMP:9674"/>
        <dbReference type="Rhea" id="RHEA-COMP:9677"/>
        <dbReference type="ChEBI" id="CHEBI:15377"/>
        <dbReference type="ChEBI" id="CHEBI:15378"/>
        <dbReference type="ChEBI" id="CHEBI:29985"/>
        <dbReference type="ChEBI" id="CHEBI:30616"/>
        <dbReference type="ChEBI" id="CHEBI:43474"/>
        <dbReference type="ChEBI" id="CHEBI:58359"/>
        <dbReference type="ChEBI" id="CHEBI:78515"/>
        <dbReference type="ChEBI" id="CHEBI:78516"/>
        <dbReference type="ChEBI" id="CHEBI:456216"/>
    </reaction>
</comment>
<comment type="subunit">
    <text evidence="1">Heterotrimer of A, B and C subunits.</text>
</comment>
<comment type="similarity">
    <text evidence="1">Belongs to the GatC family.</text>
</comment>
<accession>B1L9Q1</accession>
<name>GATC_THESQ</name>
<protein>
    <recommendedName>
        <fullName evidence="1">Aspartyl/glutamyl-tRNA(Asn/Gln) amidotransferase subunit C</fullName>
        <shortName evidence="1">Asp/Glu-ADT subunit C</shortName>
        <ecNumber evidence="1">6.3.5.-</ecNumber>
    </recommendedName>
</protein>
<dbReference type="EC" id="6.3.5.-" evidence="1"/>
<dbReference type="EMBL" id="CP000969">
    <property type="protein sequence ID" value="ACB09049.1"/>
    <property type="molecule type" value="Genomic_DNA"/>
</dbReference>
<dbReference type="RefSeq" id="WP_004082956.1">
    <property type="nucleotide sequence ID" value="NC_010483.1"/>
</dbReference>
<dbReference type="SMR" id="B1L9Q1"/>
<dbReference type="KEGG" id="trq:TRQ2_0696"/>
<dbReference type="HOGENOM" id="CLU_105899_4_1_0"/>
<dbReference type="Proteomes" id="UP000001687">
    <property type="component" value="Chromosome"/>
</dbReference>
<dbReference type="GO" id="GO:0050566">
    <property type="term" value="F:asparaginyl-tRNA synthase (glutamine-hydrolyzing) activity"/>
    <property type="evidence" value="ECO:0007669"/>
    <property type="project" value="RHEA"/>
</dbReference>
<dbReference type="GO" id="GO:0005524">
    <property type="term" value="F:ATP binding"/>
    <property type="evidence" value="ECO:0007669"/>
    <property type="project" value="UniProtKB-KW"/>
</dbReference>
<dbReference type="GO" id="GO:0050567">
    <property type="term" value="F:glutaminyl-tRNA synthase (glutamine-hydrolyzing) activity"/>
    <property type="evidence" value="ECO:0007669"/>
    <property type="project" value="UniProtKB-UniRule"/>
</dbReference>
<dbReference type="GO" id="GO:0070681">
    <property type="term" value="P:glutaminyl-tRNAGln biosynthesis via transamidation"/>
    <property type="evidence" value="ECO:0007669"/>
    <property type="project" value="TreeGrafter"/>
</dbReference>
<dbReference type="GO" id="GO:0006450">
    <property type="term" value="P:regulation of translational fidelity"/>
    <property type="evidence" value="ECO:0007669"/>
    <property type="project" value="InterPro"/>
</dbReference>
<dbReference type="GO" id="GO:0006412">
    <property type="term" value="P:translation"/>
    <property type="evidence" value="ECO:0007669"/>
    <property type="project" value="UniProtKB-UniRule"/>
</dbReference>
<dbReference type="Gene3D" id="1.10.20.60">
    <property type="entry name" value="Glu-tRNAGln amidotransferase C subunit, N-terminal domain"/>
    <property type="match status" value="1"/>
</dbReference>
<dbReference type="HAMAP" id="MF_00122">
    <property type="entry name" value="GatC"/>
    <property type="match status" value="1"/>
</dbReference>
<dbReference type="InterPro" id="IPR036113">
    <property type="entry name" value="Asp/Glu-ADT_sf_sub_c"/>
</dbReference>
<dbReference type="InterPro" id="IPR003837">
    <property type="entry name" value="GatC"/>
</dbReference>
<dbReference type="NCBIfam" id="TIGR00135">
    <property type="entry name" value="gatC"/>
    <property type="match status" value="1"/>
</dbReference>
<dbReference type="PANTHER" id="PTHR15004">
    <property type="entry name" value="GLUTAMYL-TRNA(GLN) AMIDOTRANSFERASE SUBUNIT C, MITOCHONDRIAL"/>
    <property type="match status" value="1"/>
</dbReference>
<dbReference type="PANTHER" id="PTHR15004:SF0">
    <property type="entry name" value="GLUTAMYL-TRNA(GLN) AMIDOTRANSFERASE SUBUNIT C, MITOCHONDRIAL"/>
    <property type="match status" value="1"/>
</dbReference>
<dbReference type="Pfam" id="PF02686">
    <property type="entry name" value="GatC"/>
    <property type="match status" value="1"/>
</dbReference>
<dbReference type="SUPFAM" id="SSF141000">
    <property type="entry name" value="Glu-tRNAGln amidotransferase C subunit"/>
    <property type="match status" value="1"/>
</dbReference>
<keyword id="KW-0067">ATP-binding</keyword>
<keyword id="KW-0436">Ligase</keyword>
<keyword id="KW-0547">Nucleotide-binding</keyword>
<keyword id="KW-0648">Protein biosynthesis</keyword>
<feature type="chain" id="PRO_1000095323" description="Aspartyl/glutamyl-tRNA(Asn/Gln) amidotransferase subunit C">
    <location>
        <begin position="1"/>
        <end position="96"/>
    </location>
</feature>
<reference key="1">
    <citation type="journal article" date="2011" name="J. Bacteriol.">
        <title>Genome sequence of Thermotoga sp. strain RQ2, a hyperthermophilic bacterium isolated from a geothermally heated region of the seafloor near Ribeira Quente, the Azores.</title>
        <authorList>
            <person name="Swithers K.S."/>
            <person name="DiPippo J.L."/>
            <person name="Bruce D.C."/>
            <person name="Detter C."/>
            <person name="Tapia R."/>
            <person name="Han S."/>
            <person name="Saunders E."/>
            <person name="Goodwin L.A."/>
            <person name="Han J."/>
            <person name="Woyke T."/>
            <person name="Pitluck S."/>
            <person name="Pennacchio L."/>
            <person name="Nolan M."/>
            <person name="Mikhailova N."/>
            <person name="Lykidis A."/>
            <person name="Land M.L."/>
            <person name="Brettin T."/>
            <person name="Stetter K.O."/>
            <person name="Nelson K.E."/>
            <person name="Gogarten J.P."/>
            <person name="Noll K.M."/>
        </authorList>
    </citation>
    <scope>NUCLEOTIDE SEQUENCE [LARGE SCALE GENOMIC DNA]</scope>
    <source>
        <strain>RQ2</strain>
    </source>
</reference>
<sequence length="96" mass="11309">MIKVTKDLVLHLENLARLELSEDQRESLMKDFQEILDYVELLNEVDVEGVEPMYTPVEDSAKLRKGDPRFFEMRDLIKKNFPEEKDGHIKVPGIHR</sequence>